<keyword id="KW-0472">Membrane</keyword>
<keyword id="KW-0496">Mitochondrion</keyword>
<keyword id="KW-1000">Mitochondrion outer membrane</keyword>
<keyword id="KW-0812">Transmembrane</keyword>
<keyword id="KW-1134">Transmembrane beta strand</keyword>
<evidence type="ECO:0000255" key="1">
    <source>
        <dbReference type="HAMAP-Rule" id="MF_03102"/>
    </source>
</evidence>
<evidence type="ECO:0000256" key="2">
    <source>
        <dbReference type="SAM" id="MobiDB-lite"/>
    </source>
</evidence>
<evidence type="ECO:0000305" key="3"/>
<protein>
    <recommendedName>
        <fullName evidence="1">Mitochondrial distribution and morphology protein 10</fullName>
    </recommendedName>
    <alternativeName>
        <fullName evidence="1">Mitochondrial inheritance component MDM10</fullName>
    </alternativeName>
</protein>
<name>MDM10_CRYNB</name>
<accession>P0CO67</accession>
<accession>Q55HP7</accession>
<accession>Q5K784</accession>
<organism>
    <name type="scientific">Cryptococcus neoformans var. neoformans serotype D (strain B-3501A)</name>
    <name type="common">Filobasidiella neoformans</name>
    <dbReference type="NCBI Taxonomy" id="283643"/>
    <lineage>
        <taxon>Eukaryota</taxon>
        <taxon>Fungi</taxon>
        <taxon>Dikarya</taxon>
        <taxon>Basidiomycota</taxon>
        <taxon>Agaricomycotina</taxon>
        <taxon>Tremellomycetes</taxon>
        <taxon>Tremellales</taxon>
        <taxon>Cryptococcaceae</taxon>
        <taxon>Cryptococcus</taxon>
        <taxon>Cryptococcus neoformans species complex</taxon>
    </lineage>
</organism>
<proteinExistence type="inferred from homology"/>
<feature type="chain" id="PRO_0000410139" description="Mitochondrial distribution and morphology protein 10">
    <location>
        <begin position="1"/>
        <end position="508"/>
    </location>
</feature>
<feature type="region of interest" description="Disordered" evidence="2">
    <location>
        <begin position="160"/>
        <end position="195"/>
    </location>
</feature>
<reference key="1">
    <citation type="journal article" date="2005" name="Science">
        <title>The genome of the basidiomycetous yeast and human pathogen Cryptococcus neoformans.</title>
        <authorList>
            <person name="Loftus B.J."/>
            <person name="Fung E."/>
            <person name="Roncaglia P."/>
            <person name="Rowley D."/>
            <person name="Amedeo P."/>
            <person name="Bruno D."/>
            <person name="Vamathevan J."/>
            <person name="Miranda M."/>
            <person name="Anderson I.J."/>
            <person name="Fraser J.A."/>
            <person name="Allen J.E."/>
            <person name="Bosdet I.E."/>
            <person name="Brent M.R."/>
            <person name="Chiu R."/>
            <person name="Doering T.L."/>
            <person name="Donlin M.J."/>
            <person name="D'Souza C.A."/>
            <person name="Fox D.S."/>
            <person name="Grinberg V."/>
            <person name="Fu J."/>
            <person name="Fukushima M."/>
            <person name="Haas B.J."/>
            <person name="Huang J.C."/>
            <person name="Janbon G."/>
            <person name="Jones S.J.M."/>
            <person name="Koo H.L."/>
            <person name="Krzywinski M.I."/>
            <person name="Kwon-Chung K.J."/>
            <person name="Lengeler K.B."/>
            <person name="Maiti R."/>
            <person name="Marra M.A."/>
            <person name="Marra R.E."/>
            <person name="Mathewson C.A."/>
            <person name="Mitchell T.G."/>
            <person name="Pertea M."/>
            <person name="Riggs F.R."/>
            <person name="Salzberg S.L."/>
            <person name="Schein J.E."/>
            <person name="Shvartsbeyn A."/>
            <person name="Shin H."/>
            <person name="Shumway M."/>
            <person name="Specht C.A."/>
            <person name="Suh B.B."/>
            <person name="Tenney A."/>
            <person name="Utterback T.R."/>
            <person name="Wickes B.L."/>
            <person name="Wortman J.R."/>
            <person name="Wye N.H."/>
            <person name="Kronstad J.W."/>
            <person name="Lodge J.K."/>
            <person name="Heitman J."/>
            <person name="Davis R.W."/>
            <person name="Fraser C.M."/>
            <person name="Hyman R.W."/>
        </authorList>
    </citation>
    <scope>NUCLEOTIDE SEQUENCE [LARGE SCALE GENOMIC DNA]</scope>
    <source>
        <strain>B-3501A</strain>
    </source>
</reference>
<sequence length="508" mass="56428">MIGFSAFILRNYYAAIGWNEDNLYSSLTRTSSALLDFQLPQSLILQLANSPTPIFFTSYALDALPQLNGSISYITTSMPLDEIGSGRATAFKNVIERFRVFPPPKRPQPKDEVWLGGKRIEGRDYLLYSRLHLPSLHLSGLATTRLTPTLQAHLAFLSQPAHPTSTRPTPPQTPPSHTRQPSEPSTPAPSPTPGNVFISLQHDTGRYCGEYTYSVQDGMVGLRTLYNFGWHGDEESEVDKKERREREGKRIDEEEMMEGGLKGRFSAGGEVYFSAKQRSFGISTGLRFTTVPPTLPLPLNAPVPSPPTTLTLLYNPLIGFLSSAYSAQVSPTVALATRFGVNVYSYESDLSVGGEWWIGRRRGKRGLTTDAEPQLDAESRDPVVTGIEENRELTEKMAQRASLRQVTLRDEIGEDVHAEKELYSPIPAMTDVNAGELAQQISPRLQPQQDLDDERDGVLKARLSGNWQFALLYEARIRNCLVSAGVLADLTGRQHPIRSIGLEVQYFS</sequence>
<gene>
    <name evidence="1" type="primary">MDM10</name>
    <name type="ordered locus">CNBN0730</name>
</gene>
<dbReference type="EMBL" id="AAEY01000066">
    <property type="protein sequence ID" value="EAL17246.1"/>
    <property type="status" value="ALT_SEQ"/>
    <property type="molecule type" value="Genomic_DNA"/>
</dbReference>
<dbReference type="RefSeq" id="XP_771893.1">
    <property type="nucleotide sequence ID" value="XM_766800.1"/>
</dbReference>
<dbReference type="SMR" id="P0CO67"/>
<dbReference type="GeneID" id="4939682"/>
<dbReference type="KEGG" id="cnb:CNBN0730"/>
<dbReference type="HOGENOM" id="CLU_026505_2_0_1"/>
<dbReference type="OrthoDB" id="7963at5206"/>
<dbReference type="GO" id="GO:0032865">
    <property type="term" value="C:ERMES complex"/>
    <property type="evidence" value="ECO:0007669"/>
    <property type="project" value="UniProtKB-UniRule"/>
</dbReference>
<dbReference type="GO" id="GO:0001401">
    <property type="term" value="C:SAM complex"/>
    <property type="evidence" value="ECO:0007669"/>
    <property type="project" value="TreeGrafter"/>
</dbReference>
<dbReference type="GO" id="GO:0051654">
    <property type="term" value="P:establishment of mitochondrion localization"/>
    <property type="evidence" value="ECO:0007669"/>
    <property type="project" value="TreeGrafter"/>
</dbReference>
<dbReference type="GO" id="GO:0000002">
    <property type="term" value="P:mitochondrial genome maintenance"/>
    <property type="evidence" value="ECO:0007669"/>
    <property type="project" value="UniProtKB-UniRule"/>
</dbReference>
<dbReference type="GO" id="GO:0070096">
    <property type="term" value="P:mitochondrial outer membrane translocase complex assembly"/>
    <property type="evidence" value="ECO:0007669"/>
    <property type="project" value="UniProtKB-UniRule"/>
</dbReference>
<dbReference type="GO" id="GO:1990456">
    <property type="term" value="P:mitochondrion-endoplasmic reticulum membrane tethering"/>
    <property type="evidence" value="ECO:0007669"/>
    <property type="project" value="UniProtKB-UniRule"/>
</dbReference>
<dbReference type="GO" id="GO:0015914">
    <property type="term" value="P:phospholipid transport"/>
    <property type="evidence" value="ECO:0007669"/>
    <property type="project" value="TreeGrafter"/>
</dbReference>
<dbReference type="GO" id="GO:0045040">
    <property type="term" value="P:protein insertion into mitochondrial outer membrane"/>
    <property type="evidence" value="ECO:0007669"/>
    <property type="project" value="UniProtKB-UniRule"/>
</dbReference>
<dbReference type="HAMAP" id="MF_03102">
    <property type="entry name" value="Mdm10"/>
    <property type="match status" value="1"/>
</dbReference>
<dbReference type="InterPro" id="IPR027539">
    <property type="entry name" value="Mdm10"/>
</dbReference>
<dbReference type="PANTHER" id="PTHR28035">
    <property type="entry name" value="MITOCHONDRIAL DISTRIBUTION AND MORPHOLOGY PROTEIN 10"/>
    <property type="match status" value="1"/>
</dbReference>
<dbReference type="PANTHER" id="PTHR28035:SF1">
    <property type="entry name" value="MITOCHONDRIAL DISTRIBUTION AND MORPHOLOGY PROTEIN 10"/>
    <property type="match status" value="1"/>
</dbReference>
<dbReference type="Pfam" id="PF12519">
    <property type="entry name" value="MDM10"/>
    <property type="match status" value="1"/>
</dbReference>
<comment type="function">
    <text evidence="1">Component of the ERMES/MDM complex, which serves as a molecular tether to connect the endoplasmic reticulum and mitochondria. Components of this complex are involved in the control of mitochondrial shape and protein biogenesis and may function in phospholipid exchange. MDM10 is involved in the late assembly steps of the general translocase of the mitochondrial outer membrane (TOM complex). Functions in the TOM40-specific route of the assembly of outer membrane beta-barrel proteins, including the association of TOM40 with the receptor TOM22 and small TOM proteins. Can associate with the SAM(core) complex as well as the MDM12-MMM1 complex, both involved in late steps of the major beta-barrel assembly pathway, that is responsible for biogenesis of all outer membrane beta-barrel proteins. May act as a switch that shuttles between both complexes and channels precursor proteins into the TOM40-specific pathway. Plays a role in mitochondrial morphology and in the inheritance of mitochondria.</text>
</comment>
<comment type="subunit">
    <text evidence="1">Component of the ER-mitochondria encounter structure (ERMES) or MDM complex, composed of MMM1, MDM10, MDM12 and MDM34. Associates with the mitochondrial outer membrane sorting assembly machinery SAM(core) complex.</text>
</comment>
<comment type="subcellular location">
    <subcellularLocation>
        <location evidence="1">Mitochondrion outer membrane</location>
        <topology evidence="1">Multi-pass membrane protein</topology>
    </subcellularLocation>
    <text evidence="1">The ERMES/MDM complex localizes to a few discrete foci (around 10 per single cell), that represent mitochondria-endoplasmic reticulum junctions. These foci are often found next to mtDNA nucleoids.</text>
</comment>
<comment type="domain">
    <text>Lacks alpha-helical transmembrane segments, suggesting that it resides in the membrane via beta-sheet conformations similar to those predicted for other outer membrane proteins and porin.</text>
</comment>
<comment type="similarity">
    <text evidence="1">Belongs to the MDM10 family.</text>
</comment>
<comment type="sequence caution" evidence="3">
    <conflict type="erroneous gene model prediction">
        <sequence resource="EMBL-CDS" id="EAL17246"/>
    </conflict>
</comment>